<evidence type="ECO:0000255" key="1">
    <source>
        <dbReference type="HAMAP-Rule" id="MF_00238"/>
    </source>
</evidence>
<name>KCY_SERP5</name>
<accession>A8GCH2</accession>
<sequence length="229" mass="25024">MTATAPVITVDGPSGAGKGTLCKALAESLGWRLLDSGAIYRVLALAALHHQVDITSEEALVPLAAHLDVRFIAQDGKLQVILEGEDVSNEIRTETVGNTASQAAAFPRVREALLRRQRAFREAPGLIADGRDMGTVVFPDAPVKIFLDASSEERAHRRMLQLQEKGFNVNFERLLAEIKERDDRDRNRPIAPLVPASDALVLDSTSMSIDEVIQRALTYAHEVLALPQQ</sequence>
<protein>
    <recommendedName>
        <fullName evidence="1">Cytidylate kinase</fullName>
        <shortName evidence="1">CK</shortName>
        <ecNumber evidence="1">2.7.4.25</ecNumber>
    </recommendedName>
    <alternativeName>
        <fullName evidence="1">Cytidine monophosphate kinase</fullName>
        <shortName evidence="1">CMP kinase</shortName>
    </alternativeName>
</protein>
<gene>
    <name evidence="1" type="primary">cmk</name>
    <name type="ordered locus">Spro_1708</name>
</gene>
<organism>
    <name type="scientific">Serratia proteamaculans (strain 568)</name>
    <dbReference type="NCBI Taxonomy" id="399741"/>
    <lineage>
        <taxon>Bacteria</taxon>
        <taxon>Pseudomonadati</taxon>
        <taxon>Pseudomonadota</taxon>
        <taxon>Gammaproteobacteria</taxon>
        <taxon>Enterobacterales</taxon>
        <taxon>Yersiniaceae</taxon>
        <taxon>Serratia</taxon>
    </lineage>
</organism>
<comment type="catalytic activity">
    <reaction evidence="1">
        <text>CMP + ATP = CDP + ADP</text>
        <dbReference type="Rhea" id="RHEA:11600"/>
        <dbReference type="ChEBI" id="CHEBI:30616"/>
        <dbReference type="ChEBI" id="CHEBI:58069"/>
        <dbReference type="ChEBI" id="CHEBI:60377"/>
        <dbReference type="ChEBI" id="CHEBI:456216"/>
        <dbReference type="EC" id="2.7.4.25"/>
    </reaction>
</comment>
<comment type="catalytic activity">
    <reaction evidence="1">
        <text>dCMP + ATP = dCDP + ADP</text>
        <dbReference type="Rhea" id="RHEA:25094"/>
        <dbReference type="ChEBI" id="CHEBI:30616"/>
        <dbReference type="ChEBI" id="CHEBI:57566"/>
        <dbReference type="ChEBI" id="CHEBI:58593"/>
        <dbReference type="ChEBI" id="CHEBI:456216"/>
        <dbReference type="EC" id="2.7.4.25"/>
    </reaction>
</comment>
<comment type="subcellular location">
    <subcellularLocation>
        <location evidence="1">Cytoplasm</location>
    </subcellularLocation>
</comment>
<comment type="similarity">
    <text evidence="1">Belongs to the cytidylate kinase family. Type 1 subfamily.</text>
</comment>
<proteinExistence type="inferred from homology"/>
<feature type="chain" id="PRO_1000058981" description="Cytidylate kinase">
    <location>
        <begin position="1"/>
        <end position="229"/>
    </location>
</feature>
<feature type="binding site" evidence="1">
    <location>
        <begin position="12"/>
        <end position="20"/>
    </location>
    <ligand>
        <name>ATP</name>
        <dbReference type="ChEBI" id="CHEBI:30616"/>
    </ligand>
</feature>
<reference key="1">
    <citation type="submission" date="2007-09" db="EMBL/GenBank/DDBJ databases">
        <title>Complete sequence of chromosome of Serratia proteamaculans 568.</title>
        <authorList>
            <consortium name="US DOE Joint Genome Institute"/>
            <person name="Copeland A."/>
            <person name="Lucas S."/>
            <person name="Lapidus A."/>
            <person name="Barry K."/>
            <person name="Glavina del Rio T."/>
            <person name="Dalin E."/>
            <person name="Tice H."/>
            <person name="Pitluck S."/>
            <person name="Chain P."/>
            <person name="Malfatti S."/>
            <person name="Shin M."/>
            <person name="Vergez L."/>
            <person name="Schmutz J."/>
            <person name="Larimer F."/>
            <person name="Land M."/>
            <person name="Hauser L."/>
            <person name="Kyrpides N."/>
            <person name="Kim E."/>
            <person name="Taghavi S."/>
            <person name="Newman L."/>
            <person name="Vangronsveld J."/>
            <person name="van der Lelie D."/>
            <person name="Richardson P."/>
        </authorList>
    </citation>
    <scope>NUCLEOTIDE SEQUENCE [LARGE SCALE GENOMIC DNA]</scope>
    <source>
        <strain>568</strain>
    </source>
</reference>
<dbReference type="EC" id="2.7.4.25" evidence="1"/>
<dbReference type="EMBL" id="CP000826">
    <property type="protein sequence ID" value="ABV40812.1"/>
    <property type="molecule type" value="Genomic_DNA"/>
</dbReference>
<dbReference type="SMR" id="A8GCH2"/>
<dbReference type="STRING" id="399741.Spro_1708"/>
<dbReference type="KEGG" id="spe:Spro_1708"/>
<dbReference type="eggNOG" id="COG0283">
    <property type="taxonomic scope" value="Bacteria"/>
</dbReference>
<dbReference type="HOGENOM" id="CLU_079959_0_2_6"/>
<dbReference type="OrthoDB" id="9807434at2"/>
<dbReference type="GO" id="GO:0005829">
    <property type="term" value="C:cytosol"/>
    <property type="evidence" value="ECO:0007669"/>
    <property type="project" value="TreeGrafter"/>
</dbReference>
<dbReference type="GO" id="GO:0005524">
    <property type="term" value="F:ATP binding"/>
    <property type="evidence" value="ECO:0007669"/>
    <property type="project" value="UniProtKB-UniRule"/>
</dbReference>
<dbReference type="GO" id="GO:0036430">
    <property type="term" value="F:CMP kinase activity"/>
    <property type="evidence" value="ECO:0007669"/>
    <property type="project" value="RHEA"/>
</dbReference>
<dbReference type="GO" id="GO:0036431">
    <property type="term" value="F:dCMP kinase activity"/>
    <property type="evidence" value="ECO:0007669"/>
    <property type="project" value="RHEA"/>
</dbReference>
<dbReference type="GO" id="GO:0015949">
    <property type="term" value="P:nucleobase-containing small molecule interconversion"/>
    <property type="evidence" value="ECO:0007669"/>
    <property type="project" value="TreeGrafter"/>
</dbReference>
<dbReference type="GO" id="GO:0006220">
    <property type="term" value="P:pyrimidine nucleotide metabolic process"/>
    <property type="evidence" value="ECO:0007669"/>
    <property type="project" value="UniProtKB-UniRule"/>
</dbReference>
<dbReference type="CDD" id="cd02020">
    <property type="entry name" value="CMPK"/>
    <property type="match status" value="1"/>
</dbReference>
<dbReference type="FunFam" id="3.40.50.300:FF:000262">
    <property type="entry name" value="Cytidylate kinase"/>
    <property type="match status" value="1"/>
</dbReference>
<dbReference type="Gene3D" id="3.40.50.300">
    <property type="entry name" value="P-loop containing nucleotide triphosphate hydrolases"/>
    <property type="match status" value="1"/>
</dbReference>
<dbReference type="HAMAP" id="MF_00238">
    <property type="entry name" value="Cytidyl_kinase_type1"/>
    <property type="match status" value="1"/>
</dbReference>
<dbReference type="InterPro" id="IPR003136">
    <property type="entry name" value="Cytidylate_kin"/>
</dbReference>
<dbReference type="InterPro" id="IPR011994">
    <property type="entry name" value="Cytidylate_kinase_dom"/>
</dbReference>
<dbReference type="InterPro" id="IPR027417">
    <property type="entry name" value="P-loop_NTPase"/>
</dbReference>
<dbReference type="NCBIfam" id="TIGR00017">
    <property type="entry name" value="cmk"/>
    <property type="match status" value="1"/>
</dbReference>
<dbReference type="PANTHER" id="PTHR21299:SF2">
    <property type="entry name" value="CYTIDYLATE KINASE"/>
    <property type="match status" value="1"/>
</dbReference>
<dbReference type="PANTHER" id="PTHR21299">
    <property type="entry name" value="CYTIDYLATE KINASE/PANTOATE-BETA-ALANINE LIGASE"/>
    <property type="match status" value="1"/>
</dbReference>
<dbReference type="Pfam" id="PF02224">
    <property type="entry name" value="Cytidylate_kin"/>
    <property type="match status" value="1"/>
</dbReference>
<dbReference type="SUPFAM" id="SSF52540">
    <property type="entry name" value="P-loop containing nucleoside triphosphate hydrolases"/>
    <property type="match status" value="1"/>
</dbReference>
<keyword id="KW-0067">ATP-binding</keyword>
<keyword id="KW-0963">Cytoplasm</keyword>
<keyword id="KW-0418">Kinase</keyword>
<keyword id="KW-0547">Nucleotide-binding</keyword>
<keyword id="KW-0808">Transferase</keyword>